<dbReference type="EC" id="1.16.-.-" evidence="1"/>
<dbReference type="EMBL" id="CU468135">
    <property type="protein sequence ID" value="CAO97251.1"/>
    <property type="molecule type" value="Genomic_DNA"/>
</dbReference>
<dbReference type="RefSeq" id="WP_012441920.1">
    <property type="nucleotide sequence ID" value="NC_010694.1"/>
</dbReference>
<dbReference type="SMR" id="B2VBZ3"/>
<dbReference type="STRING" id="465817.ETA_22050"/>
<dbReference type="KEGG" id="eta:ETA_22050"/>
<dbReference type="eggNOG" id="COG0783">
    <property type="taxonomic scope" value="Bacteria"/>
</dbReference>
<dbReference type="HOGENOM" id="CLU_098183_1_2_6"/>
<dbReference type="OrthoDB" id="9797687at2"/>
<dbReference type="Proteomes" id="UP000001726">
    <property type="component" value="Chromosome"/>
</dbReference>
<dbReference type="GO" id="GO:0005737">
    <property type="term" value="C:cytoplasm"/>
    <property type="evidence" value="ECO:0007669"/>
    <property type="project" value="UniProtKB-SubCell"/>
</dbReference>
<dbReference type="GO" id="GO:0003677">
    <property type="term" value="F:DNA binding"/>
    <property type="evidence" value="ECO:0007669"/>
    <property type="project" value="UniProtKB-UniRule"/>
</dbReference>
<dbReference type="GO" id="GO:0008199">
    <property type="term" value="F:ferric iron binding"/>
    <property type="evidence" value="ECO:0007669"/>
    <property type="project" value="UniProtKB-UniRule"/>
</dbReference>
<dbReference type="GO" id="GO:0016722">
    <property type="term" value="F:oxidoreductase activity, acting on metal ions"/>
    <property type="evidence" value="ECO:0007669"/>
    <property type="project" value="InterPro"/>
</dbReference>
<dbReference type="GO" id="GO:0030261">
    <property type="term" value="P:chromosome condensation"/>
    <property type="evidence" value="ECO:0007669"/>
    <property type="project" value="UniProtKB-KW"/>
</dbReference>
<dbReference type="GO" id="GO:0006879">
    <property type="term" value="P:intracellular iron ion homeostasis"/>
    <property type="evidence" value="ECO:0007669"/>
    <property type="project" value="UniProtKB-KW"/>
</dbReference>
<dbReference type="CDD" id="cd01043">
    <property type="entry name" value="DPS"/>
    <property type="match status" value="1"/>
</dbReference>
<dbReference type="Gene3D" id="1.20.1260.10">
    <property type="match status" value="1"/>
</dbReference>
<dbReference type="HAMAP" id="MF_01441">
    <property type="entry name" value="Dps"/>
    <property type="match status" value="1"/>
</dbReference>
<dbReference type="InterPro" id="IPR002177">
    <property type="entry name" value="DPS_DNA-bd"/>
</dbReference>
<dbReference type="InterPro" id="IPR023188">
    <property type="entry name" value="DPS_DNA-bd_CS"/>
</dbReference>
<dbReference type="InterPro" id="IPR023067">
    <property type="entry name" value="Dps_gammaproteobac"/>
</dbReference>
<dbReference type="InterPro" id="IPR012347">
    <property type="entry name" value="Ferritin-like"/>
</dbReference>
<dbReference type="InterPro" id="IPR009078">
    <property type="entry name" value="Ferritin-like_SF"/>
</dbReference>
<dbReference type="InterPro" id="IPR008331">
    <property type="entry name" value="Ferritin_DPS_dom"/>
</dbReference>
<dbReference type="NCBIfam" id="NF006975">
    <property type="entry name" value="PRK09448.1"/>
    <property type="match status" value="1"/>
</dbReference>
<dbReference type="PANTHER" id="PTHR42932:SF3">
    <property type="entry name" value="DNA PROTECTION DURING STARVATION PROTEIN"/>
    <property type="match status" value="1"/>
</dbReference>
<dbReference type="PANTHER" id="PTHR42932">
    <property type="entry name" value="GENERAL STRESS PROTEIN 20U"/>
    <property type="match status" value="1"/>
</dbReference>
<dbReference type="Pfam" id="PF00210">
    <property type="entry name" value="Ferritin"/>
    <property type="match status" value="1"/>
</dbReference>
<dbReference type="PIRSF" id="PIRSF005900">
    <property type="entry name" value="Dps"/>
    <property type="match status" value="1"/>
</dbReference>
<dbReference type="PRINTS" id="PR01346">
    <property type="entry name" value="HELNAPAPROT"/>
</dbReference>
<dbReference type="SUPFAM" id="SSF47240">
    <property type="entry name" value="Ferritin-like"/>
    <property type="match status" value="1"/>
</dbReference>
<dbReference type="PROSITE" id="PS00818">
    <property type="entry name" value="DPS_1"/>
    <property type="match status" value="1"/>
</dbReference>
<keyword id="KW-0963">Cytoplasm</keyword>
<keyword id="KW-0226">DNA condensation</keyword>
<keyword id="KW-0238">DNA-binding</keyword>
<keyword id="KW-0408">Iron</keyword>
<keyword id="KW-0409">Iron storage</keyword>
<keyword id="KW-0479">Metal-binding</keyword>
<keyword id="KW-0560">Oxidoreductase</keyword>
<keyword id="KW-1185">Reference proteome</keyword>
<evidence type="ECO:0000255" key="1">
    <source>
        <dbReference type="HAMAP-Rule" id="MF_01441"/>
    </source>
</evidence>
<comment type="function">
    <text evidence="1">During stationary phase, binds the chromosome non-specifically, forming a highly ordered and stable dps-DNA co-crystal within which chromosomal DNA is condensed and protected from diverse damages. It protects DNA from oxidative damage by sequestering intracellular Fe(2+) ion and storing it in the form of Fe(3+) oxyhydroxide mineral, which can be released after reduction. One hydrogen peroxide oxidizes two Fe(2+) ions, which prevents hydroxyl radical production by the Fenton reaction.</text>
</comment>
<comment type="catalytic activity">
    <reaction evidence="1">
        <text>2 Fe(2+) + H2O2 + 2 H(+) = 2 Fe(3+) + 2 H2O</text>
        <dbReference type="Rhea" id="RHEA:48712"/>
        <dbReference type="ChEBI" id="CHEBI:15377"/>
        <dbReference type="ChEBI" id="CHEBI:15378"/>
        <dbReference type="ChEBI" id="CHEBI:16240"/>
        <dbReference type="ChEBI" id="CHEBI:29033"/>
        <dbReference type="ChEBI" id="CHEBI:29034"/>
    </reaction>
</comment>
<comment type="subunit">
    <text evidence="1">Homododecamer. The 12 subunits form a hollow sphere into which the mineral iron core of up to 500 Fe(3+) can be deposited.</text>
</comment>
<comment type="subcellular location">
    <subcellularLocation>
        <location evidence="1">Cytoplasm</location>
    </subcellularLocation>
</comment>
<comment type="similarity">
    <text evidence="1">Belongs to the Dps family.</text>
</comment>
<name>DPS_ERWT9</name>
<gene>
    <name evidence="1" type="primary">dps</name>
    <name type="ordered locus">ETA_22050</name>
</gene>
<protein>
    <recommendedName>
        <fullName evidence="1">DNA protection during starvation protein</fullName>
        <ecNumber evidence="1">1.16.-.-</ecNumber>
    </recommendedName>
</protein>
<proteinExistence type="inferred from homology"/>
<reference key="1">
    <citation type="journal article" date="2008" name="Environ. Microbiol.">
        <title>The genome of Erwinia tasmaniensis strain Et1/99, a non-pathogenic bacterium in the genus Erwinia.</title>
        <authorList>
            <person name="Kube M."/>
            <person name="Migdoll A.M."/>
            <person name="Mueller I."/>
            <person name="Kuhl H."/>
            <person name="Beck A."/>
            <person name="Reinhardt R."/>
            <person name="Geider K."/>
        </authorList>
    </citation>
    <scope>NUCLEOTIDE SEQUENCE [LARGE SCALE GENOMIC DNA]</scope>
    <source>
        <strain>DSM 17950 / CFBP 7177 / CIP 109463 / NCPPB 4357 / Et1/99</strain>
    </source>
</reference>
<accession>B2VBZ3</accession>
<sequence>MSTAKLVKTKSSDLIYTRNDVAEDEKKATIEVLNRLVTELIDLSLITKQAHWNMRGANFIGVHEMLDGFRTAITDHQDTIAERVVQLGGVALGTAQVVNDRTPLKSYPLNIHSVQDHLKALADRYGVVANDMRKAIGEVEDEDTADIFTAASRDLDKFLWFIESNIE</sequence>
<feature type="chain" id="PRO_1000145906" description="DNA protection during starvation protein">
    <location>
        <begin position="1"/>
        <end position="167"/>
    </location>
</feature>
<feature type="binding site" evidence="1">
    <location>
        <position position="51"/>
    </location>
    <ligand>
        <name>Fe cation</name>
        <dbReference type="ChEBI" id="CHEBI:24875"/>
    </ligand>
</feature>
<feature type="binding site" evidence="1">
    <location>
        <position position="78"/>
    </location>
    <ligand>
        <name>Fe cation</name>
        <dbReference type="ChEBI" id="CHEBI:24875"/>
    </ligand>
</feature>
<feature type="binding site" evidence="1">
    <location>
        <position position="82"/>
    </location>
    <ligand>
        <name>Fe cation</name>
        <dbReference type="ChEBI" id="CHEBI:24875"/>
    </ligand>
</feature>
<organism>
    <name type="scientific">Erwinia tasmaniensis (strain DSM 17950 / CFBP 7177 / CIP 109463 / NCPPB 4357 / Et1/99)</name>
    <dbReference type="NCBI Taxonomy" id="465817"/>
    <lineage>
        <taxon>Bacteria</taxon>
        <taxon>Pseudomonadati</taxon>
        <taxon>Pseudomonadota</taxon>
        <taxon>Gammaproteobacteria</taxon>
        <taxon>Enterobacterales</taxon>
        <taxon>Erwiniaceae</taxon>
        <taxon>Erwinia</taxon>
    </lineage>
</organism>